<reference key="1">
    <citation type="journal article" date="1991" name="J. Bacteriol.">
        <title>Cloning and sequencing of the gene for a Pseudomonas paucimobilis enzyme that cleaves beta-aryl ether.</title>
        <authorList>
            <person name="Masai E."/>
            <person name="Katayama Y."/>
            <person name="Kawai S."/>
            <person name="Nishikawa S."/>
            <person name="Yamasaki M."/>
            <person name="Morohoshi N."/>
        </authorList>
    </citation>
    <scope>NUCLEOTIDE SEQUENCE [GENOMIC DNA]</scope>
    <source>
        <strain>NBRC 103272 / SYK-6</strain>
    </source>
</reference>
<reference key="2">
    <citation type="journal article" date="1993" name="FEBS Lett.">
        <title>A bacterial enzyme degrading the model lignin compound beta-etherase is a member of the glutathione-S-transferase superfamily.</title>
        <authorList>
            <person name="Masai E."/>
            <person name="Katayama Y."/>
            <person name="Kubota S."/>
            <person name="Kawai S."/>
            <person name="Yamasaki M."/>
            <person name="Morohoshi N."/>
        </authorList>
    </citation>
    <scope>NUCLEOTIDE SEQUENCE [GENOMIC DNA]</scope>
    <source>
        <strain>NBRC 103272 / SYK-6</strain>
    </source>
</reference>
<dbReference type="EMBL" id="D11473">
    <property type="protein sequence ID" value="BAA02031.1"/>
    <property type="molecule type" value="Genomic_DNA"/>
</dbReference>
<dbReference type="PIR" id="S33314">
    <property type="entry name" value="S33314"/>
</dbReference>
<dbReference type="RefSeq" id="WP_014075191.1">
    <property type="nucleotide sequence ID" value="NC_015976.1"/>
</dbReference>
<dbReference type="PDB" id="4XT0">
    <property type="method" value="X-ray"/>
    <property type="resolution" value="2.07 A"/>
    <property type="chains" value="A=1-243"/>
</dbReference>
<dbReference type="PDBsum" id="4XT0"/>
<dbReference type="SMR" id="P30347"/>
<dbReference type="STRING" id="627192.SLG_08650"/>
<dbReference type="OrthoDB" id="5293590at2"/>
<dbReference type="BioCyc" id="MetaCyc:MONOMER-15129"/>
<dbReference type="GO" id="GO:0046274">
    <property type="term" value="P:lignin catabolic process"/>
    <property type="evidence" value="ECO:0007669"/>
    <property type="project" value="UniProtKB-KW"/>
</dbReference>
<dbReference type="CDD" id="cd00570">
    <property type="entry name" value="GST_N_family"/>
    <property type="match status" value="1"/>
</dbReference>
<dbReference type="Gene3D" id="1.20.1050.10">
    <property type="match status" value="1"/>
</dbReference>
<dbReference type="Gene3D" id="3.40.30.10">
    <property type="entry name" value="Glutaredoxin"/>
    <property type="match status" value="1"/>
</dbReference>
<dbReference type="InterPro" id="IPR010987">
    <property type="entry name" value="Glutathione-S-Trfase_C-like"/>
</dbReference>
<dbReference type="InterPro" id="IPR036282">
    <property type="entry name" value="Glutathione-S-Trfase_C_sf"/>
</dbReference>
<dbReference type="InterPro" id="IPR040079">
    <property type="entry name" value="Glutathione_S-Trfase"/>
</dbReference>
<dbReference type="InterPro" id="IPR004045">
    <property type="entry name" value="Glutathione_S-Trfase_N"/>
</dbReference>
<dbReference type="InterPro" id="IPR004046">
    <property type="entry name" value="GST_C"/>
</dbReference>
<dbReference type="InterPro" id="IPR036249">
    <property type="entry name" value="Thioredoxin-like_sf"/>
</dbReference>
<dbReference type="PANTHER" id="PTHR44051:SF8">
    <property type="entry name" value="GLUTATHIONE S-TRANSFERASE GSTA"/>
    <property type="match status" value="1"/>
</dbReference>
<dbReference type="PANTHER" id="PTHR44051">
    <property type="entry name" value="GLUTATHIONE S-TRANSFERASE-RELATED"/>
    <property type="match status" value="1"/>
</dbReference>
<dbReference type="Pfam" id="PF00043">
    <property type="entry name" value="GST_C"/>
    <property type="match status" value="1"/>
</dbReference>
<dbReference type="Pfam" id="PF02798">
    <property type="entry name" value="GST_N"/>
    <property type="match status" value="1"/>
</dbReference>
<dbReference type="SFLD" id="SFLDS00019">
    <property type="entry name" value="Glutathione_Transferase_(cytos"/>
    <property type="match status" value="1"/>
</dbReference>
<dbReference type="SFLD" id="SFLDG00358">
    <property type="entry name" value="Main_(cytGST)"/>
    <property type="match status" value="1"/>
</dbReference>
<dbReference type="SUPFAM" id="SSF47616">
    <property type="entry name" value="GST C-terminal domain-like"/>
    <property type="match status" value="1"/>
</dbReference>
<dbReference type="SUPFAM" id="SSF52833">
    <property type="entry name" value="Thioredoxin-like"/>
    <property type="match status" value="1"/>
</dbReference>
<dbReference type="PROSITE" id="PS50405">
    <property type="entry name" value="GST_CTER"/>
    <property type="match status" value="1"/>
</dbReference>
<dbReference type="PROSITE" id="PS50404">
    <property type="entry name" value="GST_NTER"/>
    <property type="match status" value="1"/>
</dbReference>
<evidence type="ECO:0000305" key="1"/>
<evidence type="ECO:0007829" key="2">
    <source>
        <dbReference type="PDB" id="4XT0"/>
    </source>
</evidence>
<gene>
    <name type="primary">ligF</name>
</gene>
<organism>
    <name type="scientific">Sphingobium sp. (strain NBRC 103272 / SYK-6)</name>
    <dbReference type="NCBI Taxonomy" id="627192"/>
    <lineage>
        <taxon>Bacteria</taxon>
        <taxon>Pseudomonadati</taxon>
        <taxon>Pseudomonadota</taxon>
        <taxon>Alphaproteobacteria</taxon>
        <taxon>Sphingomonadales</taxon>
        <taxon>Sphingomonadaceae</taxon>
        <taxon>Sphingobium</taxon>
    </lineage>
</organism>
<accession>P30347</accession>
<keyword id="KW-0002">3D-structure</keyword>
<keyword id="KW-0439">Lignin degradation</keyword>
<feature type="chain" id="PRO_0000186042" description="Protein LigF">
    <location>
        <begin position="1"/>
        <end position="257"/>
    </location>
</feature>
<feature type="domain" description="GST N-terminal">
    <location>
        <begin position="1"/>
        <end position="82"/>
    </location>
</feature>
<feature type="domain" description="GST C-terminal">
    <location>
        <begin position="89"/>
        <end position="257"/>
    </location>
</feature>
<feature type="strand" evidence="2">
    <location>
        <begin position="3"/>
        <end position="11"/>
    </location>
</feature>
<feature type="helix" evidence="2">
    <location>
        <begin position="12"/>
        <end position="23"/>
    </location>
</feature>
<feature type="strand" evidence="2">
    <location>
        <begin position="29"/>
        <end position="32"/>
    </location>
</feature>
<feature type="helix" evidence="2">
    <location>
        <begin position="35"/>
        <end position="37"/>
    </location>
</feature>
<feature type="helix" evidence="2">
    <location>
        <begin position="39"/>
        <end position="41"/>
    </location>
</feature>
<feature type="helix" evidence="2">
    <location>
        <begin position="43"/>
        <end position="48"/>
    </location>
</feature>
<feature type="strand" evidence="2">
    <location>
        <begin position="56"/>
        <end position="59"/>
    </location>
</feature>
<feature type="strand" evidence="2">
    <location>
        <begin position="62"/>
        <end position="66"/>
    </location>
</feature>
<feature type="helix" evidence="2">
    <location>
        <begin position="67"/>
        <end position="77"/>
    </location>
</feature>
<feature type="strand" evidence="2">
    <location>
        <begin position="81"/>
        <end position="83"/>
    </location>
</feature>
<feature type="helix" evidence="2">
    <location>
        <begin position="90"/>
        <end position="105"/>
    </location>
</feature>
<feature type="helix" evidence="2">
    <location>
        <begin position="107"/>
        <end position="118"/>
    </location>
</feature>
<feature type="helix" evidence="2">
    <location>
        <begin position="121"/>
        <end position="125"/>
    </location>
</feature>
<feature type="helix" evidence="2">
    <location>
        <begin position="129"/>
        <end position="139"/>
    </location>
</feature>
<feature type="helix" evidence="2">
    <location>
        <begin position="143"/>
        <end position="154"/>
    </location>
</feature>
<feature type="helix" evidence="2">
    <location>
        <begin position="158"/>
        <end position="179"/>
    </location>
</feature>
<feature type="strand" evidence="2">
    <location>
        <begin position="182"/>
        <end position="186"/>
    </location>
</feature>
<feature type="helix" evidence="2">
    <location>
        <begin position="192"/>
        <end position="201"/>
    </location>
</feature>
<feature type="turn" evidence="2">
    <location>
        <begin position="202"/>
        <end position="205"/>
    </location>
</feature>
<feature type="turn" evidence="2">
    <location>
        <begin position="210"/>
        <end position="214"/>
    </location>
</feature>
<feature type="turn" evidence="2">
    <location>
        <begin position="217"/>
        <end position="219"/>
    </location>
</feature>
<feature type="helix" evidence="2">
    <location>
        <begin position="221"/>
        <end position="232"/>
    </location>
</feature>
<feature type="helix" evidence="2">
    <location>
        <begin position="234"/>
        <end position="241"/>
    </location>
</feature>
<name>LIGF_SPHSK</name>
<comment type="function">
    <text>Lignin degradation enzyme.</text>
</comment>
<comment type="similarity">
    <text evidence="1">Belongs to the GST superfamily.</text>
</comment>
<sequence>MTLKLYSFGPGANSLKPLATLYEKGLEFEQVFVDPSKFEQHSDWFKKINPRGQVPALWHDGKVVTESTVICEYLEDVFPESGNSLRPADPFKRAEMRVWTKWVDEYFCWCVSTIGWAFGIKAIAQKMSDEEFEEHINKNVPIPEQQLKWRRARNGFPQEMLDEEFRKVGVSVARLEETLSKQDYLVDTGYSLADICNFAIANGLQRPGGFFGDYVNQEKTPGLCAWLDRINARPAIKEMFEKSKREDLLKRQNEKVA</sequence>
<protein>
    <recommendedName>
        <fullName>Protein LigF</fullName>
    </recommendedName>
</protein>
<proteinExistence type="evidence at protein level"/>